<feature type="chain" id="PRO_0000233854" description="Bifunctional protein GlmU">
    <location>
        <begin position="1"/>
        <end position="460"/>
    </location>
</feature>
<feature type="region of interest" description="Pyrophosphorylase" evidence="1">
    <location>
        <begin position="1"/>
        <end position="229"/>
    </location>
</feature>
<feature type="region of interest" description="Linker" evidence="1">
    <location>
        <begin position="230"/>
        <end position="250"/>
    </location>
</feature>
<feature type="region of interest" description="N-acetyltransferase" evidence="1">
    <location>
        <begin position="251"/>
        <end position="460"/>
    </location>
</feature>
<feature type="active site" description="Proton acceptor" evidence="1">
    <location>
        <position position="362"/>
    </location>
</feature>
<feature type="binding site" evidence="1">
    <location>
        <begin position="8"/>
        <end position="11"/>
    </location>
    <ligand>
        <name>UDP-N-acetyl-alpha-D-glucosamine</name>
        <dbReference type="ChEBI" id="CHEBI:57705"/>
    </ligand>
</feature>
<feature type="binding site" evidence="1">
    <location>
        <position position="22"/>
    </location>
    <ligand>
        <name>UDP-N-acetyl-alpha-D-glucosamine</name>
        <dbReference type="ChEBI" id="CHEBI:57705"/>
    </ligand>
</feature>
<feature type="binding site" evidence="1">
    <location>
        <position position="72"/>
    </location>
    <ligand>
        <name>UDP-N-acetyl-alpha-D-glucosamine</name>
        <dbReference type="ChEBI" id="CHEBI:57705"/>
    </ligand>
</feature>
<feature type="binding site" evidence="1">
    <location>
        <begin position="77"/>
        <end position="78"/>
    </location>
    <ligand>
        <name>UDP-N-acetyl-alpha-D-glucosamine</name>
        <dbReference type="ChEBI" id="CHEBI:57705"/>
    </ligand>
</feature>
<feature type="binding site" evidence="1">
    <location>
        <position position="102"/>
    </location>
    <ligand>
        <name>Mg(2+)</name>
        <dbReference type="ChEBI" id="CHEBI:18420"/>
    </ligand>
</feature>
<feature type="binding site" evidence="1">
    <location>
        <position position="139"/>
    </location>
    <ligand>
        <name>UDP-N-acetyl-alpha-D-glucosamine</name>
        <dbReference type="ChEBI" id="CHEBI:57705"/>
    </ligand>
</feature>
<feature type="binding site" evidence="1">
    <location>
        <position position="154"/>
    </location>
    <ligand>
        <name>UDP-N-acetyl-alpha-D-glucosamine</name>
        <dbReference type="ChEBI" id="CHEBI:57705"/>
    </ligand>
</feature>
<feature type="binding site" evidence="1">
    <location>
        <position position="169"/>
    </location>
    <ligand>
        <name>UDP-N-acetyl-alpha-D-glucosamine</name>
        <dbReference type="ChEBI" id="CHEBI:57705"/>
    </ligand>
</feature>
<feature type="binding site" evidence="1">
    <location>
        <position position="227"/>
    </location>
    <ligand>
        <name>Mg(2+)</name>
        <dbReference type="ChEBI" id="CHEBI:18420"/>
    </ligand>
</feature>
<feature type="binding site" evidence="1">
    <location>
        <position position="227"/>
    </location>
    <ligand>
        <name>UDP-N-acetyl-alpha-D-glucosamine</name>
        <dbReference type="ChEBI" id="CHEBI:57705"/>
    </ligand>
</feature>
<feature type="binding site" evidence="1">
    <location>
        <position position="332"/>
    </location>
    <ligand>
        <name>UDP-N-acetyl-alpha-D-glucosamine</name>
        <dbReference type="ChEBI" id="CHEBI:57705"/>
    </ligand>
</feature>
<feature type="binding site" evidence="1">
    <location>
        <position position="350"/>
    </location>
    <ligand>
        <name>UDP-N-acetyl-alpha-D-glucosamine</name>
        <dbReference type="ChEBI" id="CHEBI:57705"/>
    </ligand>
</feature>
<feature type="binding site" evidence="1">
    <location>
        <position position="365"/>
    </location>
    <ligand>
        <name>UDP-N-acetyl-alpha-D-glucosamine</name>
        <dbReference type="ChEBI" id="CHEBI:57705"/>
    </ligand>
</feature>
<feature type="binding site" evidence="1">
    <location>
        <position position="376"/>
    </location>
    <ligand>
        <name>UDP-N-acetyl-alpha-D-glucosamine</name>
        <dbReference type="ChEBI" id="CHEBI:57705"/>
    </ligand>
</feature>
<feature type="binding site" evidence="1">
    <location>
        <position position="379"/>
    </location>
    <ligand>
        <name>acetyl-CoA</name>
        <dbReference type="ChEBI" id="CHEBI:57288"/>
    </ligand>
</feature>
<feature type="binding site" evidence="1">
    <location>
        <begin position="385"/>
        <end position="386"/>
    </location>
    <ligand>
        <name>acetyl-CoA</name>
        <dbReference type="ChEBI" id="CHEBI:57288"/>
    </ligand>
</feature>
<feature type="binding site" evidence="1">
    <location>
        <position position="404"/>
    </location>
    <ligand>
        <name>acetyl-CoA</name>
        <dbReference type="ChEBI" id="CHEBI:57288"/>
    </ligand>
</feature>
<feature type="binding site" evidence="1">
    <location>
        <position position="422"/>
    </location>
    <ligand>
        <name>acetyl-CoA</name>
        <dbReference type="ChEBI" id="CHEBI:57288"/>
    </ligand>
</feature>
<feature type="binding site" evidence="1">
    <location>
        <position position="439"/>
    </location>
    <ligand>
        <name>acetyl-CoA</name>
        <dbReference type="ChEBI" id="CHEBI:57288"/>
    </ligand>
</feature>
<organism>
    <name type="scientific">Streptococcus pyogenes serotype M28 (strain MGAS6180)</name>
    <dbReference type="NCBI Taxonomy" id="319701"/>
    <lineage>
        <taxon>Bacteria</taxon>
        <taxon>Bacillati</taxon>
        <taxon>Bacillota</taxon>
        <taxon>Bacilli</taxon>
        <taxon>Lactobacillales</taxon>
        <taxon>Streptococcaceae</taxon>
        <taxon>Streptococcus</taxon>
    </lineage>
</organism>
<gene>
    <name evidence="1" type="primary">glmU</name>
    <name type="ordered locus">M28_Spy0351</name>
</gene>
<sequence length="460" mass="49707">MTNYAIILAAGKGTRMTSDLPKVLHKVSGLTMLEHVFRSVKAISPEKSVTVIGHKSEMVRAVLADQSAFVHQTEQLGTGHAVMMAETQLEGLEGHTLVIAGDTPLITGESLKSLIDFHVNHKNVATILTATAQDPFGYGRIVRNKDGEVIKIVEQKDANEYEQQLKEINTGTYVFDNKRLFEALKCITTNNAQGEYYLTDVVTIFRANKEKVGAYILRDFNESLGVNDRVALATAETVMRQRITQKHMVNGVTFQNPETVYIESDVEIAPDVLIEGNVTLKGRTHIGSGTVLTNGTYIVDSEIGDNCVVTNSMIESSVLAAGVTVGPYAHLRPGTTLDREVHIGNFVEVKGSHIGEKTKAGHLTYIGNAQVGSSVNVGAGTITVNYDGQNKYETVIGDHAFIGSNSTLIAPLEVGDHALTAAGSTISKTVPIDSIAIGRSRQVTKEGYAKRLAHHPSRSK</sequence>
<dbReference type="EC" id="2.7.7.23" evidence="1"/>
<dbReference type="EC" id="2.3.1.157" evidence="1"/>
<dbReference type="EMBL" id="CP000056">
    <property type="protein sequence ID" value="AAX71465.1"/>
    <property type="molecule type" value="Genomic_DNA"/>
</dbReference>
<dbReference type="RefSeq" id="WP_011284560.1">
    <property type="nucleotide sequence ID" value="NC_007296.2"/>
</dbReference>
<dbReference type="SMR" id="Q48UZ1"/>
<dbReference type="KEGG" id="spb:M28_Spy0351"/>
<dbReference type="HOGENOM" id="CLU_029499_15_2_9"/>
<dbReference type="UniPathway" id="UPA00113">
    <property type="reaction ID" value="UER00532"/>
</dbReference>
<dbReference type="UniPathway" id="UPA00113">
    <property type="reaction ID" value="UER00533"/>
</dbReference>
<dbReference type="UniPathway" id="UPA00973"/>
<dbReference type="GO" id="GO:0005737">
    <property type="term" value="C:cytoplasm"/>
    <property type="evidence" value="ECO:0007669"/>
    <property type="project" value="UniProtKB-SubCell"/>
</dbReference>
<dbReference type="GO" id="GO:0016020">
    <property type="term" value="C:membrane"/>
    <property type="evidence" value="ECO:0007669"/>
    <property type="project" value="GOC"/>
</dbReference>
<dbReference type="GO" id="GO:0019134">
    <property type="term" value="F:glucosamine-1-phosphate N-acetyltransferase activity"/>
    <property type="evidence" value="ECO:0007669"/>
    <property type="project" value="UniProtKB-UniRule"/>
</dbReference>
<dbReference type="GO" id="GO:0000287">
    <property type="term" value="F:magnesium ion binding"/>
    <property type="evidence" value="ECO:0007669"/>
    <property type="project" value="UniProtKB-UniRule"/>
</dbReference>
<dbReference type="GO" id="GO:0003977">
    <property type="term" value="F:UDP-N-acetylglucosamine diphosphorylase activity"/>
    <property type="evidence" value="ECO:0007669"/>
    <property type="project" value="UniProtKB-UniRule"/>
</dbReference>
<dbReference type="GO" id="GO:0000902">
    <property type="term" value="P:cell morphogenesis"/>
    <property type="evidence" value="ECO:0007669"/>
    <property type="project" value="UniProtKB-UniRule"/>
</dbReference>
<dbReference type="GO" id="GO:0071555">
    <property type="term" value="P:cell wall organization"/>
    <property type="evidence" value="ECO:0007669"/>
    <property type="project" value="UniProtKB-KW"/>
</dbReference>
<dbReference type="GO" id="GO:0009245">
    <property type="term" value="P:lipid A biosynthetic process"/>
    <property type="evidence" value="ECO:0007669"/>
    <property type="project" value="UniProtKB-UniRule"/>
</dbReference>
<dbReference type="GO" id="GO:0009252">
    <property type="term" value="P:peptidoglycan biosynthetic process"/>
    <property type="evidence" value="ECO:0007669"/>
    <property type="project" value="UniProtKB-UniRule"/>
</dbReference>
<dbReference type="GO" id="GO:0008360">
    <property type="term" value="P:regulation of cell shape"/>
    <property type="evidence" value="ECO:0007669"/>
    <property type="project" value="UniProtKB-KW"/>
</dbReference>
<dbReference type="GO" id="GO:0006048">
    <property type="term" value="P:UDP-N-acetylglucosamine biosynthetic process"/>
    <property type="evidence" value="ECO:0007669"/>
    <property type="project" value="UniProtKB-UniPathway"/>
</dbReference>
<dbReference type="CDD" id="cd02540">
    <property type="entry name" value="GT2_GlmU_N_bac"/>
    <property type="match status" value="1"/>
</dbReference>
<dbReference type="CDD" id="cd03353">
    <property type="entry name" value="LbH_GlmU_C"/>
    <property type="match status" value="1"/>
</dbReference>
<dbReference type="Gene3D" id="2.160.10.10">
    <property type="entry name" value="Hexapeptide repeat proteins"/>
    <property type="match status" value="1"/>
</dbReference>
<dbReference type="Gene3D" id="3.90.550.10">
    <property type="entry name" value="Spore Coat Polysaccharide Biosynthesis Protein SpsA, Chain A"/>
    <property type="match status" value="1"/>
</dbReference>
<dbReference type="HAMAP" id="MF_01631">
    <property type="entry name" value="GlmU"/>
    <property type="match status" value="1"/>
</dbReference>
<dbReference type="InterPro" id="IPR005882">
    <property type="entry name" value="Bifunctional_GlmU"/>
</dbReference>
<dbReference type="InterPro" id="IPR050065">
    <property type="entry name" value="GlmU-like"/>
</dbReference>
<dbReference type="InterPro" id="IPR038009">
    <property type="entry name" value="GlmU_C_LbH"/>
</dbReference>
<dbReference type="InterPro" id="IPR001451">
    <property type="entry name" value="Hexapep"/>
</dbReference>
<dbReference type="InterPro" id="IPR005835">
    <property type="entry name" value="NTP_transferase_dom"/>
</dbReference>
<dbReference type="InterPro" id="IPR029044">
    <property type="entry name" value="Nucleotide-diphossugar_trans"/>
</dbReference>
<dbReference type="InterPro" id="IPR011004">
    <property type="entry name" value="Trimer_LpxA-like_sf"/>
</dbReference>
<dbReference type="NCBIfam" id="TIGR01173">
    <property type="entry name" value="glmU"/>
    <property type="match status" value="1"/>
</dbReference>
<dbReference type="NCBIfam" id="NF010934">
    <property type="entry name" value="PRK14354.1"/>
    <property type="match status" value="1"/>
</dbReference>
<dbReference type="PANTHER" id="PTHR43584:SF3">
    <property type="entry name" value="BIFUNCTIONAL PROTEIN GLMU"/>
    <property type="match status" value="1"/>
</dbReference>
<dbReference type="PANTHER" id="PTHR43584">
    <property type="entry name" value="NUCLEOTIDYL TRANSFERASE"/>
    <property type="match status" value="1"/>
</dbReference>
<dbReference type="Pfam" id="PF00132">
    <property type="entry name" value="Hexapep"/>
    <property type="match status" value="1"/>
</dbReference>
<dbReference type="Pfam" id="PF00483">
    <property type="entry name" value="NTP_transferase"/>
    <property type="match status" value="1"/>
</dbReference>
<dbReference type="SUPFAM" id="SSF53448">
    <property type="entry name" value="Nucleotide-diphospho-sugar transferases"/>
    <property type="match status" value="1"/>
</dbReference>
<dbReference type="SUPFAM" id="SSF51161">
    <property type="entry name" value="Trimeric LpxA-like enzymes"/>
    <property type="match status" value="1"/>
</dbReference>
<comment type="function">
    <text evidence="1">Catalyzes the last two sequential reactions in the de novo biosynthetic pathway for UDP-N-acetylglucosamine (UDP-GlcNAc). The C-terminal domain catalyzes the transfer of acetyl group from acetyl coenzyme A to glucosamine-1-phosphate (GlcN-1-P) to produce N-acetylglucosamine-1-phosphate (GlcNAc-1-P), which is converted into UDP-GlcNAc by the transfer of uridine 5-monophosphate (from uridine 5-triphosphate), a reaction catalyzed by the N-terminal domain.</text>
</comment>
<comment type="catalytic activity">
    <reaction evidence="1">
        <text>alpha-D-glucosamine 1-phosphate + acetyl-CoA = N-acetyl-alpha-D-glucosamine 1-phosphate + CoA + H(+)</text>
        <dbReference type="Rhea" id="RHEA:13725"/>
        <dbReference type="ChEBI" id="CHEBI:15378"/>
        <dbReference type="ChEBI" id="CHEBI:57287"/>
        <dbReference type="ChEBI" id="CHEBI:57288"/>
        <dbReference type="ChEBI" id="CHEBI:57776"/>
        <dbReference type="ChEBI" id="CHEBI:58516"/>
        <dbReference type="EC" id="2.3.1.157"/>
    </reaction>
</comment>
<comment type="catalytic activity">
    <reaction evidence="1">
        <text>N-acetyl-alpha-D-glucosamine 1-phosphate + UTP + H(+) = UDP-N-acetyl-alpha-D-glucosamine + diphosphate</text>
        <dbReference type="Rhea" id="RHEA:13509"/>
        <dbReference type="ChEBI" id="CHEBI:15378"/>
        <dbReference type="ChEBI" id="CHEBI:33019"/>
        <dbReference type="ChEBI" id="CHEBI:46398"/>
        <dbReference type="ChEBI" id="CHEBI:57705"/>
        <dbReference type="ChEBI" id="CHEBI:57776"/>
        <dbReference type="EC" id="2.7.7.23"/>
    </reaction>
</comment>
<comment type="cofactor">
    <cofactor evidence="1">
        <name>Mg(2+)</name>
        <dbReference type="ChEBI" id="CHEBI:18420"/>
    </cofactor>
    <text evidence="1">Binds 1 Mg(2+) ion per subunit.</text>
</comment>
<comment type="pathway">
    <text evidence="1">Nucleotide-sugar biosynthesis; UDP-N-acetyl-alpha-D-glucosamine biosynthesis; N-acetyl-alpha-D-glucosamine 1-phosphate from alpha-D-glucosamine 6-phosphate (route II): step 2/2.</text>
</comment>
<comment type="pathway">
    <text evidence="1">Nucleotide-sugar biosynthesis; UDP-N-acetyl-alpha-D-glucosamine biosynthesis; UDP-N-acetyl-alpha-D-glucosamine from N-acetyl-alpha-D-glucosamine 1-phosphate: step 1/1.</text>
</comment>
<comment type="pathway">
    <text evidence="1">Bacterial outer membrane biogenesis; LPS lipid A biosynthesis.</text>
</comment>
<comment type="subunit">
    <text evidence="1">Homotrimer.</text>
</comment>
<comment type="subcellular location">
    <subcellularLocation>
        <location evidence="1">Cytoplasm</location>
    </subcellularLocation>
</comment>
<comment type="similarity">
    <text evidence="1">In the N-terminal section; belongs to the N-acetylglucosamine-1-phosphate uridyltransferase family.</text>
</comment>
<comment type="similarity">
    <text evidence="1">In the C-terminal section; belongs to the transferase hexapeptide repeat family.</text>
</comment>
<reference key="1">
    <citation type="journal article" date="2005" name="J. Infect. Dis.">
        <title>Genome sequence of a serotype M28 strain of group A Streptococcus: potential new insights into puerperal sepsis and bacterial disease specificity.</title>
        <authorList>
            <person name="Green N.M."/>
            <person name="Zhang S."/>
            <person name="Porcella S.F."/>
            <person name="Nagiec M.J."/>
            <person name="Barbian K.D."/>
            <person name="Beres S.B."/>
            <person name="Lefebvre R.B."/>
            <person name="Musser J.M."/>
        </authorList>
    </citation>
    <scope>NUCLEOTIDE SEQUENCE [LARGE SCALE GENOMIC DNA]</scope>
    <source>
        <strain>MGAS6180</strain>
    </source>
</reference>
<evidence type="ECO:0000255" key="1">
    <source>
        <dbReference type="HAMAP-Rule" id="MF_01631"/>
    </source>
</evidence>
<name>GLMU_STRPM</name>
<proteinExistence type="inferred from homology"/>
<accession>Q48UZ1</accession>
<protein>
    <recommendedName>
        <fullName evidence="1">Bifunctional protein GlmU</fullName>
    </recommendedName>
    <domain>
        <recommendedName>
            <fullName evidence="1">UDP-N-acetylglucosamine pyrophosphorylase</fullName>
            <ecNumber evidence="1">2.7.7.23</ecNumber>
        </recommendedName>
        <alternativeName>
            <fullName evidence="1">N-acetylglucosamine-1-phosphate uridyltransferase</fullName>
        </alternativeName>
    </domain>
    <domain>
        <recommendedName>
            <fullName evidence="1">Glucosamine-1-phosphate N-acetyltransferase</fullName>
            <ecNumber evidence="1">2.3.1.157</ecNumber>
        </recommendedName>
    </domain>
</protein>
<keyword id="KW-0012">Acyltransferase</keyword>
<keyword id="KW-0133">Cell shape</keyword>
<keyword id="KW-0961">Cell wall biogenesis/degradation</keyword>
<keyword id="KW-0963">Cytoplasm</keyword>
<keyword id="KW-0460">Magnesium</keyword>
<keyword id="KW-0479">Metal-binding</keyword>
<keyword id="KW-0511">Multifunctional enzyme</keyword>
<keyword id="KW-0548">Nucleotidyltransferase</keyword>
<keyword id="KW-0573">Peptidoglycan synthesis</keyword>
<keyword id="KW-0677">Repeat</keyword>
<keyword id="KW-0808">Transferase</keyword>